<protein>
    <recommendedName>
        <fullName>Putative gene 45 protein</fullName>
    </recommendedName>
</protein>
<organism>
    <name type="scientific">Bacillus phage SP01</name>
    <name type="common">Bacteriophage SP01</name>
    <dbReference type="NCBI Taxonomy" id="2884427"/>
    <lineage>
        <taxon>Viruses</taxon>
        <taxon>Duplodnaviria</taxon>
        <taxon>Heunggongvirae</taxon>
        <taxon>Uroviricota</taxon>
        <taxon>Caudoviricetes</taxon>
        <taxon>Herelleviridae</taxon>
        <taxon>Spounavirinae</taxon>
        <taxon>Okubovirus</taxon>
        <taxon>Okubovirus SPO1</taxon>
    </lineage>
</organism>
<dbReference type="EMBL" id="AF031901">
    <property type="protein sequence ID" value="AAC29014.1"/>
    <property type="molecule type" value="Genomic_DNA"/>
</dbReference>
<dbReference type="RefSeq" id="YP_002300289.1">
    <property type="nucleotide sequence ID" value="NC_011421.1"/>
</dbReference>
<dbReference type="GeneID" id="7009002"/>
<dbReference type="KEGG" id="vg:7009002"/>
<sequence length="99" mass="11422">MMMDKQVEEVKKHYPIVEDWSVIVARKEDDCMTVTDAVPFILAGYKNVSYEMDDIVVLCSEPIGLTWEDVRFLKNHEGSVSFEEIGYEDKAMVYHVDLG</sequence>
<feature type="chain" id="PRO_0000106151" description="Putative gene 45 protein">
    <location>
        <begin position="1"/>
        <end position="99"/>
    </location>
</feature>
<gene>
    <name type="primary">45</name>
</gene>
<organismHost>
    <name type="scientific">Bacillus subtilis</name>
    <dbReference type="NCBI Taxonomy" id="1423"/>
</organismHost>
<name>GP45_BPSP1</name>
<proteinExistence type="predicted"/>
<reference key="1">
    <citation type="journal article" date="1998" name="Virology">
        <title>Genes and regulatory sites of the 'host-takeover module' in the terminal redundancy of Bacillus subtilis bacteriophage SPO1.</title>
        <authorList>
            <person name="Stewart C.R."/>
            <person name="Gaslightwala I."/>
            <person name="Hinata K."/>
            <person name="Krolikowski K.A."/>
            <person name="Needleman D.S."/>
            <person name="Peng A.S.-Y."/>
            <person name="Peterman M.A."/>
            <person name="Tobias A."/>
            <person name="Wei P."/>
        </authorList>
    </citation>
    <scope>NUCLEOTIDE SEQUENCE [GENOMIC DNA]</scope>
</reference>
<accession>O48399</accession>